<feature type="chain" id="PRO_0000057505" description="tRNA pseudouridine synthase A">
    <location>
        <begin position="1"/>
        <end position="269"/>
    </location>
</feature>
<feature type="active site" description="Nucleophile" evidence="1">
    <location>
        <position position="55"/>
    </location>
</feature>
<feature type="binding site" evidence="1">
    <location>
        <position position="111"/>
    </location>
    <ligand>
        <name>substrate</name>
    </ligand>
</feature>
<reference key="1">
    <citation type="journal article" date="2002" name="J. Mol. Microbiol. Biotechnol.">
        <title>The genome of Methanosarcina mazei: evidence for lateral gene transfer between Bacteria and Archaea.</title>
        <authorList>
            <person name="Deppenmeier U."/>
            <person name="Johann A."/>
            <person name="Hartsch T."/>
            <person name="Merkl R."/>
            <person name="Schmitz R.A."/>
            <person name="Martinez-Arias R."/>
            <person name="Henne A."/>
            <person name="Wiezer A."/>
            <person name="Baeumer S."/>
            <person name="Jacobi C."/>
            <person name="Brueggemann H."/>
            <person name="Lienard T."/>
            <person name="Christmann A."/>
            <person name="Boemecke M."/>
            <person name="Steckel S."/>
            <person name="Bhattacharyya A."/>
            <person name="Lykidis A."/>
            <person name="Overbeek R."/>
            <person name="Klenk H.-P."/>
            <person name="Gunsalus R.P."/>
            <person name="Fritz H.-J."/>
            <person name="Gottschalk G."/>
        </authorList>
    </citation>
    <scope>NUCLEOTIDE SEQUENCE [LARGE SCALE GENOMIC DNA]</scope>
    <source>
        <strain>ATCC BAA-159 / DSM 3647 / Goe1 / Go1 / JCM 11833 / OCM 88</strain>
    </source>
</reference>
<keyword id="KW-0413">Isomerase</keyword>
<keyword id="KW-0819">tRNA processing</keyword>
<organism>
    <name type="scientific">Methanosarcina mazei (strain ATCC BAA-159 / DSM 3647 / Goe1 / Go1 / JCM 11833 / OCM 88)</name>
    <name type="common">Methanosarcina frisia</name>
    <dbReference type="NCBI Taxonomy" id="192952"/>
    <lineage>
        <taxon>Archaea</taxon>
        <taxon>Methanobacteriati</taxon>
        <taxon>Methanobacteriota</taxon>
        <taxon>Stenosarchaea group</taxon>
        <taxon>Methanomicrobia</taxon>
        <taxon>Methanosarcinales</taxon>
        <taxon>Methanosarcinaceae</taxon>
        <taxon>Methanosarcina</taxon>
    </lineage>
</organism>
<accession>Q8PWT1</accession>
<comment type="function">
    <text evidence="1">Formation of pseudouridine at positions 38, 39 and 40 in the anticodon stem and loop of transfer RNAs.</text>
</comment>
<comment type="catalytic activity">
    <reaction evidence="1">
        <text>uridine(38/39/40) in tRNA = pseudouridine(38/39/40) in tRNA</text>
        <dbReference type="Rhea" id="RHEA:22376"/>
        <dbReference type="Rhea" id="RHEA-COMP:10085"/>
        <dbReference type="Rhea" id="RHEA-COMP:10087"/>
        <dbReference type="ChEBI" id="CHEBI:65314"/>
        <dbReference type="ChEBI" id="CHEBI:65315"/>
        <dbReference type="EC" id="5.4.99.12"/>
    </reaction>
</comment>
<comment type="similarity">
    <text evidence="1">Belongs to the tRNA pseudouridine synthase TruA family.</text>
</comment>
<protein>
    <recommendedName>
        <fullName evidence="1">tRNA pseudouridine synthase A</fullName>
        <ecNumber evidence="1">5.4.99.12</ecNumber>
    </recommendedName>
    <alternativeName>
        <fullName evidence="1">tRNA pseudouridine(38-40) synthase</fullName>
    </alternativeName>
    <alternativeName>
        <fullName evidence="1">tRNA pseudouridylate synthase I</fullName>
    </alternativeName>
    <alternativeName>
        <fullName evidence="1">tRNA-uridine isomerase I</fullName>
    </alternativeName>
</protein>
<dbReference type="EC" id="5.4.99.12" evidence="1"/>
<dbReference type="EMBL" id="AE008384">
    <property type="protein sequence ID" value="AAM31191.1"/>
    <property type="molecule type" value="Genomic_DNA"/>
</dbReference>
<dbReference type="RefSeq" id="WP_011033441.1">
    <property type="nucleotide sequence ID" value="NC_003901.1"/>
</dbReference>
<dbReference type="SMR" id="Q8PWT1"/>
<dbReference type="GeneID" id="66137066"/>
<dbReference type="KEGG" id="mma:MM_1495"/>
<dbReference type="PATRIC" id="fig|192952.21.peg.1727"/>
<dbReference type="eggNOG" id="arCOG04449">
    <property type="taxonomic scope" value="Archaea"/>
</dbReference>
<dbReference type="HOGENOM" id="CLU_014673_4_2_2"/>
<dbReference type="Proteomes" id="UP000000595">
    <property type="component" value="Chromosome"/>
</dbReference>
<dbReference type="GO" id="GO:0003723">
    <property type="term" value="F:RNA binding"/>
    <property type="evidence" value="ECO:0007669"/>
    <property type="project" value="InterPro"/>
</dbReference>
<dbReference type="GO" id="GO:0160147">
    <property type="term" value="F:tRNA pseudouridine(38-40) synthase activity"/>
    <property type="evidence" value="ECO:0007669"/>
    <property type="project" value="UniProtKB-EC"/>
</dbReference>
<dbReference type="GO" id="GO:0031119">
    <property type="term" value="P:tRNA pseudouridine synthesis"/>
    <property type="evidence" value="ECO:0007669"/>
    <property type="project" value="UniProtKB-UniRule"/>
</dbReference>
<dbReference type="CDD" id="cd02866">
    <property type="entry name" value="PseudoU_synth_TruA_Archea"/>
    <property type="match status" value="1"/>
</dbReference>
<dbReference type="FunFam" id="3.30.70.580:FF:000001">
    <property type="entry name" value="tRNA pseudouridine synthase A"/>
    <property type="match status" value="1"/>
</dbReference>
<dbReference type="Gene3D" id="3.30.70.660">
    <property type="entry name" value="Pseudouridine synthase I, catalytic domain, C-terminal subdomain"/>
    <property type="match status" value="1"/>
</dbReference>
<dbReference type="Gene3D" id="3.30.70.580">
    <property type="entry name" value="Pseudouridine synthase I, catalytic domain, N-terminal subdomain"/>
    <property type="match status" value="1"/>
</dbReference>
<dbReference type="HAMAP" id="MF_00171">
    <property type="entry name" value="TruA"/>
    <property type="match status" value="1"/>
</dbReference>
<dbReference type="InterPro" id="IPR020103">
    <property type="entry name" value="PsdUridine_synth_cat_dom_sf"/>
</dbReference>
<dbReference type="InterPro" id="IPR001406">
    <property type="entry name" value="PsdUridine_synth_TruA"/>
</dbReference>
<dbReference type="InterPro" id="IPR020097">
    <property type="entry name" value="PsdUridine_synth_TruA_a/b_dom"/>
</dbReference>
<dbReference type="InterPro" id="IPR020095">
    <property type="entry name" value="PsdUridine_synth_TruA_C"/>
</dbReference>
<dbReference type="InterPro" id="IPR020094">
    <property type="entry name" value="TruA/RsuA/RluB/E/F_N"/>
</dbReference>
<dbReference type="NCBIfam" id="TIGR00071">
    <property type="entry name" value="hisT_truA"/>
    <property type="match status" value="1"/>
</dbReference>
<dbReference type="PANTHER" id="PTHR11142">
    <property type="entry name" value="PSEUDOURIDYLATE SYNTHASE"/>
    <property type="match status" value="1"/>
</dbReference>
<dbReference type="PANTHER" id="PTHR11142:SF0">
    <property type="entry name" value="TRNA PSEUDOURIDINE SYNTHASE-LIKE 1"/>
    <property type="match status" value="1"/>
</dbReference>
<dbReference type="Pfam" id="PF01416">
    <property type="entry name" value="PseudoU_synth_1"/>
    <property type="match status" value="2"/>
</dbReference>
<dbReference type="PIRSF" id="PIRSF001430">
    <property type="entry name" value="tRNA_psdUrid_synth"/>
    <property type="match status" value="1"/>
</dbReference>
<dbReference type="SUPFAM" id="SSF55120">
    <property type="entry name" value="Pseudouridine synthase"/>
    <property type="match status" value="1"/>
</dbReference>
<name>TRUA_METMA</name>
<gene>
    <name evidence="1" type="primary">truA</name>
    <name type="ordered locus">MM_1495</name>
</gene>
<evidence type="ECO:0000255" key="1">
    <source>
        <dbReference type="HAMAP-Rule" id="MF_00171"/>
    </source>
</evidence>
<sequence>MRVALKLAYIGTEFHGSQIQPSVETVEKELFKALRNLRIIESPKSANYICAGRTDAGVHALGQVIAFDTDRPNLAIPRIINSGLPPTIWVWAHAEVPYDFDARRHAVSRHYRYVISGEGYDISKMREASKLLLGTHDFENFSRSNGEKSTVRTLERINVRVDGDITKIDVVGNSFLWNMVRKIVTALSMIGKGVRDNDWLIQMLNPDIYEEGIEPAPAYGLTLMGVNYGEEINWIEDNYSIRRASDQNSKRILRYRVMAEVLEELIYHE</sequence>
<proteinExistence type="inferred from homology"/>